<accession>Q7A181</accession>
<name>QOX2_STAAW</name>
<sequence length="366" mass="41777">MSKFKSLLLLFGTLILLSGCSNIEIFNAKGPVASSQKFLILYSIVFMLVICFVVLGMFAIFIYKYSYNKNAESGKMHHNAIIETIWFVIPIIIVAALAIPTVKTLYDYEKPPKSEKDPMVVYAVSAGYKWFFAYPDEHIETVNTLTIPKDRPVVFKLQAMDTMTSFWIPQLGGQKYAMTGMTMNWTLEASQTGTFRGRNSNFNGEGFSRQTFKVNAVSQKDYDKWVKEVKGKKTLDQDTFDKQLLPSTPNKALEFNGTHMAFVDPAADPEYIFYAYKRFNFELKDPNFTSEENMFKDVSDKPLIPARKAQITNANYKRHGMKLMILGNDEPYNNEFKKDESKNAKEMKKISKDAQDQDNDDHGGGH</sequence>
<proteinExistence type="inferred from homology"/>
<evidence type="ECO:0000250" key="1"/>
<evidence type="ECO:0000255" key="2"/>
<evidence type="ECO:0000255" key="3">
    <source>
        <dbReference type="PROSITE-ProRule" id="PRU00303"/>
    </source>
</evidence>
<evidence type="ECO:0000256" key="4">
    <source>
        <dbReference type="SAM" id="MobiDB-lite"/>
    </source>
</evidence>
<evidence type="ECO:0000305" key="5"/>
<dbReference type="EC" id="1.10.3.-"/>
<dbReference type="EMBL" id="BA000033">
    <property type="protein sequence ID" value="BAB94809.1"/>
    <property type="molecule type" value="Genomic_DNA"/>
</dbReference>
<dbReference type="RefSeq" id="WP_000032836.1">
    <property type="nucleotide sequence ID" value="NC_003923.1"/>
</dbReference>
<dbReference type="SMR" id="Q7A181"/>
<dbReference type="KEGG" id="sam:MW0944"/>
<dbReference type="HOGENOM" id="CLU_036876_6_0_9"/>
<dbReference type="GO" id="GO:0005886">
    <property type="term" value="C:plasma membrane"/>
    <property type="evidence" value="ECO:0007669"/>
    <property type="project" value="UniProtKB-SubCell"/>
</dbReference>
<dbReference type="GO" id="GO:0005507">
    <property type="term" value="F:copper ion binding"/>
    <property type="evidence" value="ECO:0007669"/>
    <property type="project" value="InterPro"/>
</dbReference>
<dbReference type="GO" id="GO:0009486">
    <property type="term" value="F:cytochrome bo3 ubiquinol oxidase activity"/>
    <property type="evidence" value="ECO:0007669"/>
    <property type="project" value="InterPro"/>
</dbReference>
<dbReference type="GO" id="GO:0004129">
    <property type="term" value="F:cytochrome-c oxidase activity"/>
    <property type="evidence" value="ECO:0007669"/>
    <property type="project" value="InterPro"/>
</dbReference>
<dbReference type="GO" id="GO:0016682">
    <property type="term" value="F:oxidoreductase activity, acting on diphenols and related substances as donors, oxygen as acceptor"/>
    <property type="evidence" value="ECO:0007669"/>
    <property type="project" value="InterPro"/>
</dbReference>
<dbReference type="GO" id="GO:0042773">
    <property type="term" value="P:ATP synthesis coupled electron transport"/>
    <property type="evidence" value="ECO:0007669"/>
    <property type="project" value="TreeGrafter"/>
</dbReference>
<dbReference type="CDD" id="cd04212">
    <property type="entry name" value="CuRO_UO_II"/>
    <property type="match status" value="1"/>
</dbReference>
<dbReference type="FunFam" id="2.60.40.420:FF:000014">
    <property type="entry name" value="Quinol oxidase subunit 2"/>
    <property type="match status" value="1"/>
</dbReference>
<dbReference type="Gene3D" id="1.10.287.90">
    <property type="match status" value="1"/>
</dbReference>
<dbReference type="Gene3D" id="2.60.40.420">
    <property type="entry name" value="Cupredoxins - blue copper proteins"/>
    <property type="match status" value="1"/>
</dbReference>
<dbReference type="InterPro" id="IPR045187">
    <property type="entry name" value="CcO_II"/>
</dbReference>
<dbReference type="InterPro" id="IPR002429">
    <property type="entry name" value="CcO_II-like_C"/>
</dbReference>
<dbReference type="InterPro" id="IPR008972">
    <property type="entry name" value="Cupredoxin"/>
</dbReference>
<dbReference type="InterPro" id="IPR034227">
    <property type="entry name" value="CuRO_UO_II"/>
</dbReference>
<dbReference type="InterPro" id="IPR011759">
    <property type="entry name" value="Cyt_c_oxidase_su2_TM_dom"/>
</dbReference>
<dbReference type="InterPro" id="IPR036257">
    <property type="entry name" value="Cyt_c_oxidase_su2_TM_sf"/>
</dbReference>
<dbReference type="InterPro" id="IPR006332">
    <property type="entry name" value="QoxA"/>
</dbReference>
<dbReference type="NCBIfam" id="TIGR01432">
    <property type="entry name" value="QOXA"/>
    <property type="match status" value="1"/>
</dbReference>
<dbReference type="PANTHER" id="PTHR22888:SF18">
    <property type="entry name" value="CYTOCHROME BO(3) UBIQUINOL OXIDASE SUBUNIT 2"/>
    <property type="match status" value="1"/>
</dbReference>
<dbReference type="PANTHER" id="PTHR22888">
    <property type="entry name" value="CYTOCHROME C OXIDASE, SUBUNIT II"/>
    <property type="match status" value="1"/>
</dbReference>
<dbReference type="Pfam" id="PF02790">
    <property type="entry name" value="COX2_TM"/>
    <property type="match status" value="1"/>
</dbReference>
<dbReference type="SUPFAM" id="SSF49503">
    <property type="entry name" value="Cupredoxins"/>
    <property type="match status" value="1"/>
</dbReference>
<dbReference type="SUPFAM" id="SSF81464">
    <property type="entry name" value="Cytochrome c oxidase subunit II-like, transmembrane region"/>
    <property type="match status" value="1"/>
</dbReference>
<dbReference type="PROSITE" id="PS50857">
    <property type="entry name" value="COX2_CUA"/>
    <property type="match status" value="1"/>
</dbReference>
<dbReference type="PROSITE" id="PS50999">
    <property type="entry name" value="COX2_TM"/>
    <property type="match status" value="1"/>
</dbReference>
<dbReference type="PROSITE" id="PS51257">
    <property type="entry name" value="PROKAR_LIPOPROTEIN"/>
    <property type="match status" value="1"/>
</dbReference>
<feature type="signal peptide" evidence="3">
    <location>
        <begin position="1"/>
        <end position="19"/>
    </location>
</feature>
<feature type="chain" id="PRO_0000275876" description="Probable quinol oxidase subunit 2">
    <location>
        <begin position="20"/>
        <end position="366"/>
    </location>
</feature>
<feature type="transmembrane region" description="Helical" evidence="2">
    <location>
        <begin position="38"/>
        <end position="58"/>
    </location>
</feature>
<feature type="transmembrane region" description="Helical" evidence="2">
    <location>
        <begin position="80"/>
        <end position="100"/>
    </location>
</feature>
<feature type="region of interest" description="Disordered" evidence="4">
    <location>
        <begin position="330"/>
        <end position="366"/>
    </location>
</feature>
<feature type="compositionally biased region" description="Basic and acidic residues" evidence="4">
    <location>
        <begin position="335"/>
        <end position="366"/>
    </location>
</feature>
<feature type="lipid moiety-binding region" description="N-palmitoyl cysteine" evidence="3">
    <location>
        <position position="20"/>
    </location>
</feature>
<feature type="lipid moiety-binding region" description="S-diacylglycerol cysteine" evidence="3">
    <location>
        <position position="20"/>
    </location>
</feature>
<organism>
    <name type="scientific">Staphylococcus aureus (strain MW2)</name>
    <dbReference type="NCBI Taxonomy" id="196620"/>
    <lineage>
        <taxon>Bacteria</taxon>
        <taxon>Bacillati</taxon>
        <taxon>Bacillota</taxon>
        <taxon>Bacilli</taxon>
        <taxon>Bacillales</taxon>
        <taxon>Staphylococcaceae</taxon>
        <taxon>Staphylococcus</taxon>
    </lineage>
</organism>
<comment type="function">
    <text evidence="1">Catalyzes quinol oxidation with the concomitant reduction of oxygen to water. Subunit II transfers the electrons from a quinol to the binuclear center of the catalytic subunit I (By similarity).</text>
</comment>
<comment type="catalytic activity">
    <reaction>
        <text>2 a quinol + O2 = 2 a quinone + 2 H2O</text>
        <dbReference type="Rhea" id="RHEA:55376"/>
        <dbReference type="ChEBI" id="CHEBI:15377"/>
        <dbReference type="ChEBI" id="CHEBI:15379"/>
        <dbReference type="ChEBI" id="CHEBI:24646"/>
        <dbReference type="ChEBI" id="CHEBI:132124"/>
    </reaction>
</comment>
<comment type="subcellular location">
    <subcellularLocation>
        <location evidence="3">Cell membrane</location>
        <topology evidence="1">Multi-pass membrane protein</topology>
    </subcellularLocation>
</comment>
<comment type="similarity">
    <text evidence="5">Belongs to the cytochrome c oxidase subunit 2 family.</text>
</comment>
<protein>
    <recommendedName>
        <fullName>Probable quinol oxidase subunit 2</fullName>
        <ecNumber>1.10.3.-</ecNumber>
    </recommendedName>
    <alternativeName>
        <fullName>Quinol oxidase polypeptide II</fullName>
    </alternativeName>
</protein>
<gene>
    <name type="primary">qoxA</name>
    <name type="ordered locus">MW0944</name>
</gene>
<keyword id="KW-1003">Cell membrane</keyword>
<keyword id="KW-0249">Electron transport</keyword>
<keyword id="KW-0449">Lipoprotein</keyword>
<keyword id="KW-0472">Membrane</keyword>
<keyword id="KW-0560">Oxidoreductase</keyword>
<keyword id="KW-0564">Palmitate</keyword>
<keyword id="KW-0679">Respiratory chain</keyword>
<keyword id="KW-0732">Signal</keyword>
<keyword id="KW-0812">Transmembrane</keyword>
<keyword id="KW-1133">Transmembrane helix</keyword>
<keyword id="KW-0813">Transport</keyword>
<reference key="1">
    <citation type="journal article" date="2002" name="Lancet">
        <title>Genome and virulence determinants of high virulence community-acquired MRSA.</title>
        <authorList>
            <person name="Baba T."/>
            <person name="Takeuchi F."/>
            <person name="Kuroda M."/>
            <person name="Yuzawa H."/>
            <person name="Aoki K."/>
            <person name="Oguchi A."/>
            <person name="Nagai Y."/>
            <person name="Iwama N."/>
            <person name="Asano K."/>
            <person name="Naimi T."/>
            <person name="Kuroda H."/>
            <person name="Cui L."/>
            <person name="Yamamoto K."/>
            <person name="Hiramatsu K."/>
        </authorList>
    </citation>
    <scope>NUCLEOTIDE SEQUENCE [LARGE SCALE GENOMIC DNA]</scope>
    <source>
        <strain>MW2</strain>
    </source>
</reference>